<protein>
    <recommendedName>
        <fullName evidence="1">UPF0353 protein Mkms_2500</fullName>
    </recommendedName>
</protein>
<gene>
    <name type="ordered locus">Mkms_2500</name>
</gene>
<comment type="subcellular location">
    <subcellularLocation>
        <location evidence="1">Cell membrane</location>
        <topology evidence="1">Multi-pass membrane protein</topology>
    </subcellularLocation>
</comment>
<comment type="similarity">
    <text evidence="1">Belongs to the UPF0353 family.</text>
</comment>
<reference key="1">
    <citation type="submission" date="2006-12" db="EMBL/GenBank/DDBJ databases">
        <title>Complete sequence of chromosome of Mycobacterium sp. KMS.</title>
        <authorList>
            <consortium name="US DOE Joint Genome Institute"/>
            <person name="Copeland A."/>
            <person name="Lucas S."/>
            <person name="Lapidus A."/>
            <person name="Barry K."/>
            <person name="Detter J.C."/>
            <person name="Glavina del Rio T."/>
            <person name="Hammon N."/>
            <person name="Israni S."/>
            <person name="Dalin E."/>
            <person name="Tice H."/>
            <person name="Pitluck S."/>
            <person name="Kiss H."/>
            <person name="Brettin T."/>
            <person name="Bruce D."/>
            <person name="Han C."/>
            <person name="Tapia R."/>
            <person name="Gilna P."/>
            <person name="Schmutz J."/>
            <person name="Larimer F."/>
            <person name="Land M."/>
            <person name="Hauser L."/>
            <person name="Kyrpides N."/>
            <person name="Mikhailova N."/>
            <person name="Miller C.D."/>
            <person name="Richardson P."/>
        </authorList>
    </citation>
    <scope>NUCLEOTIDE SEQUENCE [LARGE SCALE GENOMIC DNA]</scope>
    <source>
        <strain>KMS</strain>
    </source>
</reference>
<organism>
    <name type="scientific">Mycobacterium sp. (strain KMS)</name>
    <dbReference type="NCBI Taxonomy" id="189918"/>
    <lineage>
        <taxon>Bacteria</taxon>
        <taxon>Bacillati</taxon>
        <taxon>Actinomycetota</taxon>
        <taxon>Actinomycetes</taxon>
        <taxon>Mycobacteriales</taxon>
        <taxon>Mycobacteriaceae</taxon>
        <taxon>Mycobacterium</taxon>
    </lineage>
</organism>
<sequence length="335" mass="35950">MTLPLLGPMSFSGFEHPWFFLFLIVVLALAGLYVIVALARQRRILRFANMELLESVAPNRPNRWRHLPAILLVASLVLLTVAMAGPTRDVRVPRNRAVVMLVIDVSQSMRATDVSPSRLAAAQEASKQFADELTPGINLGLIAYAGTATVLVSPTTNREATKTAIDKLQLADRTATGEGIFTALQAIATVGAVIGGGDEPPPARIVLFSDGKETVPSNPDNPKGAFTAARTAKDQGVPISTISFGTPYGYVEINEQRQPVPVDDQMLKKIADLSEGEAFTASSLEQLREVYANLQQQIGYETIKGDASVGWLRLGALVLALSALAALLLNRRLPG</sequence>
<proteinExistence type="inferred from homology"/>
<evidence type="ECO:0000255" key="1">
    <source>
        <dbReference type="HAMAP-Rule" id="MF_01340"/>
    </source>
</evidence>
<keyword id="KW-1003">Cell membrane</keyword>
<keyword id="KW-0472">Membrane</keyword>
<keyword id="KW-0812">Transmembrane</keyword>
<keyword id="KW-1133">Transmembrane helix</keyword>
<name>Y2500_MYCSK</name>
<feature type="chain" id="PRO_1000067654" description="UPF0353 protein Mkms_2500">
    <location>
        <begin position="1"/>
        <end position="335"/>
    </location>
</feature>
<feature type="transmembrane region" description="Helical" evidence="1">
    <location>
        <begin position="18"/>
        <end position="38"/>
    </location>
</feature>
<feature type="transmembrane region" description="Helical" evidence="1">
    <location>
        <begin position="67"/>
        <end position="87"/>
    </location>
</feature>
<feature type="transmembrane region" description="Helical" evidence="1">
    <location>
        <begin position="309"/>
        <end position="329"/>
    </location>
</feature>
<feature type="domain" description="VWFA" evidence="1">
    <location>
        <begin position="98"/>
        <end position="294"/>
    </location>
</feature>
<dbReference type="EMBL" id="CP000518">
    <property type="protein sequence ID" value="ABL91697.1"/>
    <property type="molecule type" value="Genomic_DNA"/>
</dbReference>
<dbReference type="SMR" id="A1UFT9"/>
<dbReference type="STRING" id="189918.Mkms_2500"/>
<dbReference type="KEGG" id="mkm:Mkms_2500"/>
<dbReference type="HOGENOM" id="CLU_024570_2_0_11"/>
<dbReference type="OrthoDB" id="8882959at2"/>
<dbReference type="GO" id="GO:0005886">
    <property type="term" value="C:plasma membrane"/>
    <property type="evidence" value="ECO:0007669"/>
    <property type="project" value="UniProtKB-SubCell"/>
</dbReference>
<dbReference type="Gene3D" id="3.40.50.410">
    <property type="entry name" value="von Willebrand factor, type A domain"/>
    <property type="match status" value="1"/>
</dbReference>
<dbReference type="HAMAP" id="MF_01340">
    <property type="entry name" value="UPF0353"/>
    <property type="match status" value="1"/>
</dbReference>
<dbReference type="InterPro" id="IPR024163">
    <property type="entry name" value="Aerotolerance_reg_N"/>
</dbReference>
<dbReference type="InterPro" id="IPR022933">
    <property type="entry name" value="UPF0353"/>
</dbReference>
<dbReference type="InterPro" id="IPR050768">
    <property type="entry name" value="UPF0353/GerABKA_families"/>
</dbReference>
<dbReference type="InterPro" id="IPR002035">
    <property type="entry name" value="VWF_A"/>
</dbReference>
<dbReference type="InterPro" id="IPR036465">
    <property type="entry name" value="vWFA_dom_sf"/>
</dbReference>
<dbReference type="NCBIfam" id="NF010238">
    <property type="entry name" value="PRK13685.1"/>
    <property type="match status" value="1"/>
</dbReference>
<dbReference type="PANTHER" id="PTHR22550:SF5">
    <property type="entry name" value="LEUCINE ZIPPER PROTEIN 4"/>
    <property type="match status" value="1"/>
</dbReference>
<dbReference type="PANTHER" id="PTHR22550">
    <property type="entry name" value="SPORE GERMINATION PROTEIN"/>
    <property type="match status" value="1"/>
</dbReference>
<dbReference type="Pfam" id="PF07584">
    <property type="entry name" value="BatA"/>
    <property type="match status" value="1"/>
</dbReference>
<dbReference type="Pfam" id="PF13519">
    <property type="entry name" value="VWA_2"/>
    <property type="match status" value="1"/>
</dbReference>
<dbReference type="SMART" id="SM00327">
    <property type="entry name" value="VWA"/>
    <property type="match status" value="1"/>
</dbReference>
<dbReference type="SUPFAM" id="SSF53300">
    <property type="entry name" value="vWA-like"/>
    <property type="match status" value="1"/>
</dbReference>
<dbReference type="PROSITE" id="PS50234">
    <property type="entry name" value="VWFA"/>
    <property type="match status" value="1"/>
</dbReference>
<accession>A1UFT9</accession>